<reference key="1">
    <citation type="submission" date="2006-10" db="EMBL/GenBank/DDBJ databases">
        <authorList>
            <person name="Fleischmann R.D."/>
            <person name="Dodson R.J."/>
            <person name="Haft D.H."/>
            <person name="Merkel J.S."/>
            <person name="Nelson W.C."/>
            <person name="Fraser C.M."/>
        </authorList>
    </citation>
    <scope>NUCLEOTIDE SEQUENCE [LARGE SCALE GENOMIC DNA]</scope>
    <source>
        <strain>ATCC 700084 / mc(2)155</strain>
    </source>
</reference>
<reference key="2">
    <citation type="journal article" date="2007" name="Genome Biol.">
        <title>Interrupted coding sequences in Mycobacterium smegmatis: authentic mutations or sequencing errors?</title>
        <authorList>
            <person name="Deshayes C."/>
            <person name="Perrodou E."/>
            <person name="Gallien S."/>
            <person name="Euphrasie D."/>
            <person name="Schaeffer C."/>
            <person name="Van-Dorsselaer A."/>
            <person name="Poch O."/>
            <person name="Lecompte O."/>
            <person name="Reyrat J.-M."/>
        </authorList>
    </citation>
    <scope>NUCLEOTIDE SEQUENCE [LARGE SCALE GENOMIC DNA]</scope>
    <source>
        <strain>ATCC 700084 / mc(2)155</strain>
    </source>
</reference>
<reference key="3">
    <citation type="journal article" date="2009" name="Genome Res.">
        <title>Ortho-proteogenomics: multiple proteomes investigation through orthology and a new MS-based protocol.</title>
        <authorList>
            <person name="Gallien S."/>
            <person name="Perrodou E."/>
            <person name="Carapito C."/>
            <person name="Deshayes C."/>
            <person name="Reyrat J.-M."/>
            <person name="Van Dorsselaer A."/>
            <person name="Poch O."/>
            <person name="Schaeffer C."/>
            <person name="Lecompte O."/>
        </authorList>
    </citation>
    <scope>NUCLEOTIDE SEQUENCE [LARGE SCALE GENOMIC DNA]</scope>
    <source>
        <strain>ATCC 700084 / mc(2)155</strain>
    </source>
</reference>
<reference key="4">
    <citation type="journal article" date="2004" name="Antimicrob. Agents Chemother.">
        <title>Efflux pump-mediated intrinsic drug resistance in Mycobacterium smegmatis.</title>
        <authorList>
            <person name="Li X.Z."/>
            <person name="Zhang L."/>
            <person name="Nikaido H."/>
        </authorList>
    </citation>
    <scope>FUNCTION</scope>
    <scope>DISRUPTION PHENOTYPE</scope>
    <source>
        <strain>ATCC 700084 / mc(2)155</strain>
    </source>
</reference>
<reference key="5">
    <citation type="journal article" date="2006" name="Antimicrob. Agents Chemother.">
        <title>LfrR is a repressor that regulates expression of the efflux pump LfrA in Mycobacterium smegmatis.</title>
        <authorList>
            <person name="Buroni S."/>
            <person name="Manina G."/>
            <person name="Guglierame P."/>
            <person name="Pasca M.R."/>
            <person name="Riccardi G."/>
            <person name="De Rossi E."/>
        </authorList>
    </citation>
    <scope>FUNCTION</scope>
    <scope>DNA-BINDING</scope>
    <scope>ACTIVITY REGULATION</scope>
    <scope>INDUCTION</scope>
    <source>
        <strain>ATCC 700084 / mc(2)155</strain>
    </source>
</reference>
<reference key="6">
    <citation type="journal article" date="2011" name="BMC Microbiol.">
        <title>Ethidium bromide transport across Mycobacterium smegmatis cell-wall: correlation with antibiotic resistance.</title>
        <authorList>
            <person name="Rodrigues L."/>
            <person name="Ramos J."/>
            <person name="Couto I."/>
            <person name="Amaral L."/>
            <person name="Viveiros M."/>
        </authorList>
    </citation>
    <scope>DISRUPTION PHENOTYPE</scope>
    <source>
        <strain>ATCC 700084 / mc(2)155</strain>
    </source>
</reference>
<reference evidence="10 11" key="7">
    <citation type="journal article" date="2009" name="J. Bacteriol.">
        <title>Structural plasticity and distinct drug-binding modes of LfrR, a mycobacterial efflux pump regulator.</title>
        <authorList>
            <person name="Bellinzoni M."/>
            <person name="Buroni S."/>
            <person name="Schaeffer F."/>
            <person name="Riccardi G."/>
            <person name="De Rossi E."/>
            <person name="Alzari P.M."/>
        </authorList>
    </citation>
    <scope>X-RAY CRYSTALLOGRAPHY (1.90 ANGSTROMS) OF APOPROTEIN AND IN COMPLEX WITH PROFLAVINE</scope>
    <scope>ACTIVITY REGULATION</scope>
    <scope>SUBUNIT</scope>
    <scope>DOMAIN</scope>
</reference>
<feature type="chain" id="PRO_0000447321" description="HTH-type transcriptional repressor LfrR">
    <location>
        <begin position="1"/>
        <end position="189"/>
    </location>
</feature>
<feature type="domain" description="HTH tetR-type" evidence="1">
    <location>
        <begin position="12"/>
        <end position="70"/>
    </location>
</feature>
<feature type="DNA-binding region" description="H-T-H motif" evidence="1">
    <location>
        <begin position="33"/>
        <end position="52"/>
    </location>
</feature>
<feature type="region of interest" description="Proflavine binding" evidence="4">
    <location>
        <begin position="70"/>
        <end position="71"/>
    </location>
</feature>
<gene>
    <name evidence="6" type="primary">lfrR</name>
    <name evidence="8" type="ordered locus">MSMEG_6223</name>
    <name evidence="9" type="ordered locus">MSMEI_6062</name>
</gene>
<sequence>MTSPSIESGARERTRRAILDAAMLVLADHPTAALGDIAAAAGVGRSTVHRYYPERTDLLRALARHVHDLSNAAIERADPTSGPVDAALRRVVESQLDLGPIVLFVYYEPSILADPELAAYFDIGDEAIVEVLNRASTERPEYPPGWARRVFWALMQAGYEAAKDGMPRHQIVDAIMTSLTSGIITLPRT</sequence>
<dbReference type="EMBL" id="CP000480">
    <property type="protein sequence ID" value="ABK72312.1"/>
    <property type="molecule type" value="Genomic_DNA"/>
</dbReference>
<dbReference type="EMBL" id="CP001663">
    <property type="protein sequence ID" value="AFP42493.1"/>
    <property type="molecule type" value="Genomic_DNA"/>
</dbReference>
<dbReference type="RefSeq" id="WP_003897643.1">
    <property type="nucleotide sequence ID" value="NZ_SIJM01000027.1"/>
</dbReference>
<dbReference type="RefSeq" id="YP_890442.1">
    <property type="nucleotide sequence ID" value="NC_008596.1"/>
</dbReference>
<dbReference type="PDB" id="2V57">
    <property type="method" value="X-ray"/>
    <property type="resolution" value="1.90 A"/>
    <property type="chains" value="A/B/C/D=1-189"/>
</dbReference>
<dbReference type="PDB" id="2WGB">
    <property type="method" value="X-ray"/>
    <property type="resolution" value="2.00 A"/>
    <property type="chains" value="A/B=1-189"/>
</dbReference>
<dbReference type="PDBsum" id="2V57"/>
<dbReference type="PDBsum" id="2WGB"/>
<dbReference type="SMR" id="A0R5K4"/>
<dbReference type="STRING" id="246196.MSMEG_6223"/>
<dbReference type="PaxDb" id="246196-MSMEI_6062"/>
<dbReference type="KEGG" id="msb:LJ00_30770"/>
<dbReference type="KEGG" id="msg:MSMEI_6062"/>
<dbReference type="KEGG" id="msm:MSMEG_6223"/>
<dbReference type="PATRIC" id="fig|246196.56.peg.6185"/>
<dbReference type="eggNOG" id="COG1309">
    <property type="taxonomic scope" value="Bacteria"/>
</dbReference>
<dbReference type="OrthoDB" id="3869819at2"/>
<dbReference type="Proteomes" id="UP000000757">
    <property type="component" value="Chromosome"/>
</dbReference>
<dbReference type="Proteomes" id="UP000006158">
    <property type="component" value="Chromosome"/>
</dbReference>
<dbReference type="GO" id="GO:0003700">
    <property type="term" value="F:DNA-binding transcription factor activity"/>
    <property type="evidence" value="ECO:0007669"/>
    <property type="project" value="TreeGrafter"/>
</dbReference>
<dbReference type="GO" id="GO:0000976">
    <property type="term" value="F:transcription cis-regulatory region binding"/>
    <property type="evidence" value="ECO:0007669"/>
    <property type="project" value="TreeGrafter"/>
</dbReference>
<dbReference type="Gene3D" id="1.10.357.10">
    <property type="entry name" value="Tetracycline Repressor, domain 2"/>
    <property type="match status" value="1"/>
</dbReference>
<dbReference type="InterPro" id="IPR009057">
    <property type="entry name" value="Homeodomain-like_sf"/>
</dbReference>
<dbReference type="InterPro" id="IPR050109">
    <property type="entry name" value="HTH-type_TetR-like_transc_reg"/>
</dbReference>
<dbReference type="InterPro" id="IPR001647">
    <property type="entry name" value="HTH_TetR"/>
</dbReference>
<dbReference type="PANTHER" id="PTHR30055:SF234">
    <property type="entry name" value="HTH-TYPE TRANSCRIPTIONAL REGULATOR BETI"/>
    <property type="match status" value="1"/>
</dbReference>
<dbReference type="PANTHER" id="PTHR30055">
    <property type="entry name" value="HTH-TYPE TRANSCRIPTIONAL REGULATOR RUTR"/>
    <property type="match status" value="1"/>
</dbReference>
<dbReference type="Pfam" id="PF00440">
    <property type="entry name" value="TetR_N"/>
    <property type="match status" value="1"/>
</dbReference>
<dbReference type="SUPFAM" id="SSF46689">
    <property type="entry name" value="Homeodomain-like"/>
    <property type="match status" value="1"/>
</dbReference>
<dbReference type="PROSITE" id="PS50977">
    <property type="entry name" value="HTH_TETR_2"/>
    <property type="match status" value="1"/>
</dbReference>
<proteinExistence type="evidence at protein level"/>
<accession>A0R5K4</accession>
<accession>I7FUD9</accession>
<name>LFRR_MYCS2</name>
<organism>
    <name type="scientific">Mycolicibacterium smegmatis (strain ATCC 700084 / mc(2)155)</name>
    <name type="common">Mycobacterium smegmatis</name>
    <dbReference type="NCBI Taxonomy" id="246196"/>
    <lineage>
        <taxon>Bacteria</taxon>
        <taxon>Bacillati</taxon>
        <taxon>Actinomycetota</taxon>
        <taxon>Actinomycetes</taxon>
        <taxon>Mycobacteriales</taxon>
        <taxon>Mycobacteriaceae</taxon>
        <taxon>Mycolicibacterium</taxon>
    </lineage>
</organism>
<comment type="function">
    <text evidence="2 3">Represses the transcription of the lfrRA operon by binding directly to the promoter region of lfrR-lfrA (PubMed:15215089, PubMed:17043130). Binds specifically to a 143-bp region upstream of the lfrR gene (PubMed:17043130).</text>
</comment>
<comment type="activity regulation">
    <text evidence="3 4">Repressor activity is regulated by binding of different substrates of the LfrA multidrug efflux pump, such as acriflavine, proflavine, ethidium bromide and rhodamine 123. Binding of these ligands causes the dissociation of LfrR from the promoter, inducing lfrA expression.</text>
</comment>
<comment type="subunit">
    <text evidence="4">Homodimer. Forms a structurally asymmetric homodimer exhibiting local unfolding and a blocked drug-binding site.</text>
</comment>
<comment type="induction">
    <text evidence="3">Negatively autoregulated.</text>
</comment>
<comment type="domain">
    <text evidence="4">Binding of ligands causes significant conformational changes.</text>
</comment>
<comment type="disruption phenotype">
    <text evidence="2 5">Deletion of the gene increases the expression of lfrA and produces higher resistance to multiple drugs.</text>
</comment>
<evidence type="ECO:0000255" key="1">
    <source>
        <dbReference type="PROSITE-ProRule" id="PRU00335"/>
    </source>
</evidence>
<evidence type="ECO:0000269" key="2">
    <source>
    </source>
</evidence>
<evidence type="ECO:0000269" key="3">
    <source>
    </source>
</evidence>
<evidence type="ECO:0000269" key="4">
    <source>
    </source>
</evidence>
<evidence type="ECO:0000269" key="5">
    <source>
    </source>
</evidence>
<evidence type="ECO:0000303" key="6">
    <source>
    </source>
</evidence>
<evidence type="ECO:0000305" key="7"/>
<evidence type="ECO:0000312" key="8">
    <source>
        <dbReference type="EMBL" id="ABK72312.1"/>
    </source>
</evidence>
<evidence type="ECO:0000312" key="9">
    <source>
        <dbReference type="EMBL" id="AFP42493.1"/>
    </source>
</evidence>
<evidence type="ECO:0007744" key="10">
    <source>
        <dbReference type="PDB" id="2V57"/>
    </source>
</evidence>
<evidence type="ECO:0007744" key="11">
    <source>
        <dbReference type="PDB" id="2WGB"/>
    </source>
</evidence>
<protein>
    <recommendedName>
        <fullName evidence="7">HTH-type transcriptional repressor LfrR</fullName>
    </recommendedName>
</protein>
<keyword id="KW-0002">3D-structure</keyword>
<keyword id="KW-0238">DNA-binding</keyword>
<keyword id="KW-1185">Reference proteome</keyword>
<keyword id="KW-0678">Repressor</keyword>
<keyword id="KW-0804">Transcription</keyword>
<keyword id="KW-0805">Transcription regulation</keyword>